<accession>A0QVH7</accession>
<accession>I7G8T5</accession>
<protein>
    <recommendedName>
        <fullName evidence="1">1-deoxy-D-xylulose 5-phosphate reductoisomerase</fullName>
        <shortName evidence="1">DXP reductoisomerase</shortName>
        <ecNumber evidence="1">1.1.1.267</ecNumber>
    </recommendedName>
    <alternativeName>
        <fullName evidence="1">1-deoxyxylulose-5-phosphate reductoisomerase</fullName>
    </alternativeName>
    <alternativeName>
        <fullName evidence="1">2-C-methyl-D-erythritol 4-phosphate synthase</fullName>
    </alternativeName>
</protein>
<evidence type="ECO:0000255" key="1">
    <source>
        <dbReference type="HAMAP-Rule" id="MF_00183"/>
    </source>
</evidence>
<proteinExistence type="inferred from homology"/>
<comment type="function">
    <text evidence="1">Catalyzes the NADPH-dependent rearrangement and reduction of 1-deoxy-D-xylulose-5-phosphate (DXP) to 2-C-methyl-D-erythritol 4-phosphate (MEP).</text>
</comment>
<comment type="catalytic activity">
    <reaction evidence="1">
        <text>2-C-methyl-D-erythritol 4-phosphate + NADP(+) = 1-deoxy-D-xylulose 5-phosphate + NADPH + H(+)</text>
        <dbReference type="Rhea" id="RHEA:13717"/>
        <dbReference type="ChEBI" id="CHEBI:15378"/>
        <dbReference type="ChEBI" id="CHEBI:57783"/>
        <dbReference type="ChEBI" id="CHEBI:57792"/>
        <dbReference type="ChEBI" id="CHEBI:58262"/>
        <dbReference type="ChEBI" id="CHEBI:58349"/>
        <dbReference type="EC" id="1.1.1.267"/>
    </reaction>
    <physiologicalReaction direction="right-to-left" evidence="1">
        <dbReference type="Rhea" id="RHEA:13719"/>
    </physiologicalReaction>
</comment>
<comment type="cofactor">
    <cofactor evidence="1">
        <name>Mg(2+)</name>
        <dbReference type="ChEBI" id="CHEBI:18420"/>
    </cofactor>
    <cofactor evidence="1">
        <name>Mn(2+)</name>
        <dbReference type="ChEBI" id="CHEBI:29035"/>
    </cofactor>
</comment>
<comment type="pathway">
    <text evidence="1">Isoprenoid biosynthesis; isopentenyl diphosphate biosynthesis via DXP pathway; isopentenyl diphosphate from 1-deoxy-D-xylulose 5-phosphate: step 1/6.</text>
</comment>
<comment type="similarity">
    <text evidence="1">Belongs to the DXR family.</text>
</comment>
<feature type="chain" id="PRO_1000124102" description="1-deoxy-D-xylulose 5-phosphate reductoisomerase">
    <location>
        <begin position="1"/>
        <end position="398"/>
    </location>
</feature>
<feature type="binding site" evidence="1">
    <location>
        <position position="21"/>
    </location>
    <ligand>
        <name>NADPH</name>
        <dbReference type="ChEBI" id="CHEBI:57783"/>
    </ligand>
</feature>
<feature type="binding site" evidence="1">
    <location>
        <position position="22"/>
    </location>
    <ligand>
        <name>NADPH</name>
        <dbReference type="ChEBI" id="CHEBI:57783"/>
    </ligand>
</feature>
<feature type="binding site" evidence="1">
    <location>
        <position position="23"/>
    </location>
    <ligand>
        <name>NADPH</name>
        <dbReference type="ChEBI" id="CHEBI:57783"/>
    </ligand>
</feature>
<feature type="binding site" evidence="1">
    <location>
        <position position="24"/>
    </location>
    <ligand>
        <name>NADPH</name>
        <dbReference type="ChEBI" id="CHEBI:57783"/>
    </ligand>
</feature>
<feature type="binding site" evidence="1">
    <location>
        <position position="47"/>
    </location>
    <ligand>
        <name>NADPH</name>
        <dbReference type="ChEBI" id="CHEBI:57783"/>
    </ligand>
</feature>
<feature type="binding site" evidence="1">
    <location>
        <position position="50"/>
    </location>
    <ligand>
        <name>NADPH</name>
        <dbReference type="ChEBI" id="CHEBI:57783"/>
    </ligand>
</feature>
<feature type="binding site" evidence="1">
    <location>
        <position position="127"/>
    </location>
    <ligand>
        <name>NADPH</name>
        <dbReference type="ChEBI" id="CHEBI:57783"/>
    </ligand>
</feature>
<feature type="binding site" evidence="1">
    <location>
        <position position="128"/>
    </location>
    <ligand>
        <name>1-deoxy-D-xylulose 5-phosphate</name>
        <dbReference type="ChEBI" id="CHEBI:57792"/>
    </ligand>
</feature>
<feature type="binding site" evidence="1">
    <location>
        <position position="129"/>
    </location>
    <ligand>
        <name>NADPH</name>
        <dbReference type="ChEBI" id="CHEBI:57783"/>
    </ligand>
</feature>
<feature type="binding site" evidence="1">
    <location>
        <position position="151"/>
    </location>
    <ligand>
        <name>Mn(2+)</name>
        <dbReference type="ChEBI" id="CHEBI:29035"/>
    </ligand>
</feature>
<feature type="binding site" evidence="1">
    <location>
        <position position="152"/>
    </location>
    <ligand>
        <name>1-deoxy-D-xylulose 5-phosphate</name>
        <dbReference type="ChEBI" id="CHEBI:57792"/>
    </ligand>
</feature>
<feature type="binding site" evidence="1">
    <location>
        <position position="153"/>
    </location>
    <ligand>
        <name>1-deoxy-D-xylulose 5-phosphate</name>
        <dbReference type="ChEBI" id="CHEBI:57792"/>
    </ligand>
</feature>
<feature type="binding site" evidence="1">
    <location>
        <position position="153"/>
    </location>
    <ligand>
        <name>Mn(2+)</name>
        <dbReference type="ChEBI" id="CHEBI:29035"/>
    </ligand>
</feature>
<feature type="binding site" evidence="1">
    <location>
        <position position="177"/>
    </location>
    <ligand>
        <name>1-deoxy-D-xylulose 5-phosphate</name>
        <dbReference type="ChEBI" id="CHEBI:57792"/>
    </ligand>
</feature>
<feature type="binding site" evidence="1">
    <location>
        <position position="200"/>
    </location>
    <ligand>
        <name>1-deoxy-D-xylulose 5-phosphate</name>
        <dbReference type="ChEBI" id="CHEBI:57792"/>
    </ligand>
</feature>
<feature type="binding site" evidence="1">
    <location>
        <position position="206"/>
    </location>
    <ligand>
        <name>NADPH</name>
        <dbReference type="ChEBI" id="CHEBI:57783"/>
    </ligand>
</feature>
<feature type="binding site" evidence="1">
    <location>
        <position position="213"/>
    </location>
    <ligand>
        <name>1-deoxy-D-xylulose 5-phosphate</name>
        <dbReference type="ChEBI" id="CHEBI:57792"/>
    </ligand>
</feature>
<feature type="binding site" evidence="1">
    <location>
        <position position="218"/>
    </location>
    <ligand>
        <name>1-deoxy-D-xylulose 5-phosphate</name>
        <dbReference type="ChEBI" id="CHEBI:57792"/>
    </ligand>
</feature>
<feature type="binding site" evidence="1">
    <location>
        <position position="219"/>
    </location>
    <ligand>
        <name>1-deoxy-D-xylulose 5-phosphate</name>
        <dbReference type="ChEBI" id="CHEBI:57792"/>
    </ligand>
</feature>
<feature type="binding site" evidence="1">
    <location>
        <position position="222"/>
    </location>
    <ligand>
        <name>1-deoxy-D-xylulose 5-phosphate</name>
        <dbReference type="ChEBI" id="CHEBI:57792"/>
    </ligand>
</feature>
<feature type="binding site" evidence="1">
    <location>
        <position position="222"/>
    </location>
    <ligand>
        <name>Mn(2+)</name>
        <dbReference type="ChEBI" id="CHEBI:29035"/>
    </ligand>
</feature>
<keyword id="KW-0414">Isoprene biosynthesis</keyword>
<keyword id="KW-0464">Manganese</keyword>
<keyword id="KW-0479">Metal-binding</keyword>
<keyword id="KW-0521">NADP</keyword>
<keyword id="KW-0560">Oxidoreductase</keyword>
<keyword id="KW-1185">Reference proteome</keyword>
<name>DXR_MYCS2</name>
<dbReference type="EC" id="1.1.1.267" evidence="1"/>
<dbReference type="EMBL" id="CP000480">
    <property type="protein sequence ID" value="ABK73985.1"/>
    <property type="molecule type" value="Genomic_DNA"/>
</dbReference>
<dbReference type="EMBL" id="CP001663">
    <property type="protein sequence ID" value="AFP38984.1"/>
    <property type="molecule type" value="Genomic_DNA"/>
</dbReference>
<dbReference type="RefSeq" id="WP_011728448.1">
    <property type="nucleotide sequence ID" value="NZ_SIJM01000029.1"/>
</dbReference>
<dbReference type="RefSeq" id="YP_886915.1">
    <property type="nucleotide sequence ID" value="NC_008596.1"/>
</dbReference>
<dbReference type="SMR" id="A0QVH7"/>
<dbReference type="STRING" id="246196.MSMEG_2578"/>
<dbReference type="BindingDB" id="A0QVH7"/>
<dbReference type="ChEMBL" id="CHEMBL2010623"/>
<dbReference type="PaxDb" id="246196-MSMEI_2516"/>
<dbReference type="GeneID" id="93457365"/>
<dbReference type="KEGG" id="msb:LJ00_12830"/>
<dbReference type="KEGG" id="msg:MSMEI_2516"/>
<dbReference type="KEGG" id="msm:MSMEG_2578"/>
<dbReference type="PATRIC" id="fig|246196.19.peg.2544"/>
<dbReference type="eggNOG" id="COG0743">
    <property type="taxonomic scope" value="Bacteria"/>
</dbReference>
<dbReference type="OrthoDB" id="9806546at2"/>
<dbReference type="UniPathway" id="UPA00056">
    <property type="reaction ID" value="UER00092"/>
</dbReference>
<dbReference type="Proteomes" id="UP000000757">
    <property type="component" value="Chromosome"/>
</dbReference>
<dbReference type="Proteomes" id="UP000006158">
    <property type="component" value="Chromosome"/>
</dbReference>
<dbReference type="GO" id="GO:0030604">
    <property type="term" value="F:1-deoxy-D-xylulose-5-phosphate reductoisomerase activity"/>
    <property type="evidence" value="ECO:0007669"/>
    <property type="project" value="UniProtKB-UniRule"/>
</dbReference>
<dbReference type="GO" id="GO:0030145">
    <property type="term" value="F:manganese ion binding"/>
    <property type="evidence" value="ECO:0007669"/>
    <property type="project" value="TreeGrafter"/>
</dbReference>
<dbReference type="GO" id="GO:0070402">
    <property type="term" value="F:NADPH binding"/>
    <property type="evidence" value="ECO:0007669"/>
    <property type="project" value="InterPro"/>
</dbReference>
<dbReference type="GO" id="GO:0051484">
    <property type="term" value="P:isopentenyl diphosphate biosynthetic process, methylerythritol 4-phosphate pathway involved in terpenoid biosynthetic process"/>
    <property type="evidence" value="ECO:0007669"/>
    <property type="project" value="TreeGrafter"/>
</dbReference>
<dbReference type="FunFam" id="3.40.50.720:FF:000045">
    <property type="entry name" value="1-deoxy-D-xylulose 5-phosphate reductoisomerase"/>
    <property type="match status" value="1"/>
</dbReference>
<dbReference type="Gene3D" id="1.10.1740.10">
    <property type="match status" value="1"/>
</dbReference>
<dbReference type="Gene3D" id="3.40.50.720">
    <property type="entry name" value="NAD(P)-binding Rossmann-like Domain"/>
    <property type="match status" value="1"/>
</dbReference>
<dbReference type="HAMAP" id="MF_00183">
    <property type="entry name" value="DXP_reductoisom"/>
    <property type="match status" value="1"/>
</dbReference>
<dbReference type="InterPro" id="IPR003821">
    <property type="entry name" value="DXP_reductoisomerase"/>
</dbReference>
<dbReference type="InterPro" id="IPR013644">
    <property type="entry name" value="DXP_reductoisomerase_C"/>
</dbReference>
<dbReference type="InterPro" id="IPR013512">
    <property type="entry name" value="DXP_reductoisomerase_N"/>
</dbReference>
<dbReference type="InterPro" id="IPR026877">
    <property type="entry name" value="DXPR_C"/>
</dbReference>
<dbReference type="InterPro" id="IPR036169">
    <property type="entry name" value="DXPR_C_sf"/>
</dbReference>
<dbReference type="InterPro" id="IPR036291">
    <property type="entry name" value="NAD(P)-bd_dom_sf"/>
</dbReference>
<dbReference type="NCBIfam" id="TIGR00243">
    <property type="entry name" value="Dxr"/>
    <property type="match status" value="1"/>
</dbReference>
<dbReference type="PANTHER" id="PTHR30525">
    <property type="entry name" value="1-DEOXY-D-XYLULOSE 5-PHOSPHATE REDUCTOISOMERASE"/>
    <property type="match status" value="1"/>
</dbReference>
<dbReference type="PANTHER" id="PTHR30525:SF0">
    <property type="entry name" value="1-DEOXY-D-XYLULOSE 5-PHOSPHATE REDUCTOISOMERASE, CHLOROPLASTIC"/>
    <property type="match status" value="1"/>
</dbReference>
<dbReference type="Pfam" id="PF08436">
    <property type="entry name" value="DXP_redisom_C"/>
    <property type="match status" value="1"/>
</dbReference>
<dbReference type="Pfam" id="PF02670">
    <property type="entry name" value="DXP_reductoisom"/>
    <property type="match status" value="1"/>
</dbReference>
<dbReference type="Pfam" id="PF13288">
    <property type="entry name" value="DXPR_C"/>
    <property type="match status" value="1"/>
</dbReference>
<dbReference type="PIRSF" id="PIRSF006205">
    <property type="entry name" value="Dxp_reductismrs"/>
    <property type="match status" value="1"/>
</dbReference>
<dbReference type="SUPFAM" id="SSF69055">
    <property type="entry name" value="1-deoxy-D-xylulose-5-phosphate reductoisomerase, C-terminal domain"/>
    <property type="match status" value="1"/>
</dbReference>
<dbReference type="SUPFAM" id="SSF55347">
    <property type="entry name" value="Glyceraldehyde-3-phosphate dehydrogenase-like, C-terminal domain"/>
    <property type="match status" value="1"/>
</dbReference>
<dbReference type="SUPFAM" id="SSF51735">
    <property type="entry name" value="NAD(P)-binding Rossmann-fold domains"/>
    <property type="match status" value="1"/>
</dbReference>
<organism>
    <name type="scientific">Mycolicibacterium smegmatis (strain ATCC 700084 / mc(2)155)</name>
    <name type="common">Mycobacterium smegmatis</name>
    <dbReference type="NCBI Taxonomy" id="246196"/>
    <lineage>
        <taxon>Bacteria</taxon>
        <taxon>Bacillati</taxon>
        <taxon>Actinomycetota</taxon>
        <taxon>Actinomycetes</taxon>
        <taxon>Mycobacteriales</taxon>
        <taxon>Mycobacteriaceae</taxon>
        <taxon>Mycolicibacterium</taxon>
    </lineage>
</organism>
<gene>
    <name evidence="1" type="primary">dxr</name>
    <name type="ordered locus">MSMEG_2578</name>
    <name type="ordered locus">MSMEI_2516</name>
</gene>
<sequence length="398" mass="41064">MTTSAASGEPGRQRVLILGSTGSIGTQALEVIAANPDRFEVVGLAAGGGNPELLAAQRAQTGVAAVAVADPAAAEAVGDVRYSGPDAVTRLVEDTEADVVLNALVGALGLQPTLAALATGARLALANKESLVAGGPLVLKAAAPGQIVPVDSEHSAMAQCLRGGTRAELDKIVLTASGGPFLGWSAEDLKSVTPEQAGKHPTWSMGPMNTLNSATLVNKGLELIETHLLFGVDYDDIDVVVHPQSIVHSMATFTDGSTLAQASPPDMKLPIALALGWPDRIAGAAAACDFSTASTWEFLPLDNAVFPAVDLARFAGKQGGCLTAVYNSANEEAAEAFLDGRIGFPDIVETVGDVLHAADRWAAEPATVDDVLDAQRWAREQARGVVEQKSVRRGLVTK</sequence>
<reference key="1">
    <citation type="submission" date="2006-10" db="EMBL/GenBank/DDBJ databases">
        <authorList>
            <person name="Fleischmann R.D."/>
            <person name="Dodson R.J."/>
            <person name="Haft D.H."/>
            <person name="Merkel J.S."/>
            <person name="Nelson W.C."/>
            <person name="Fraser C.M."/>
        </authorList>
    </citation>
    <scope>NUCLEOTIDE SEQUENCE [LARGE SCALE GENOMIC DNA]</scope>
    <source>
        <strain>ATCC 700084 / mc(2)155</strain>
    </source>
</reference>
<reference key="2">
    <citation type="journal article" date="2007" name="Genome Biol.">
        <title>Interrupted coding sequences in Mycobacterium smegmatis: authentic mutations or sequencing errors?</title>
        <authorList>
            <person name="Deshayes C."/>
            <person name="Perrodou E."/>
            <person name="Gallien S."/>
            <person name="Euphrasie D."/>
            <person name="Schaeffer C."/>
            <person name="Van-Dorsselaer A."/>
            <person name="Poch O."/>
            <person name="Lecompte O."/>
            <person name="Reyrat J.-M."/>
        </authorList>
    </citation>
    <scope>NUCLEOTIDE SEQUENCE [LARGE SCALE GENOMIC DNA]</scope>
    <source>
        <strain>ATCC 700084 / mc(2)155</strain>
    </source>
</reference>
<reference key="3">
    <citation type="journal article" date="2009" name="Genome Res.">
        <title>Ortho-proteogenomics: multiple proteomes investigation through orthology and a new MS-based protocol.</title>
        <authorList>
            <person name="Gallien S."/>
            <person name="Perrodou E."/>
            <person name="Carapito C."/>
            <person name="Deshayes C."/>
            <person name="Reyrat J.-M."/>
            <person name="Van Dorsselaer A."/>
            <person name="Poch O."/>
            <person name="Schaeffer C."/>
            <person name="Lecompte O."/>
        </authorList>
    </citation>
    <scope>NUCLEOTIDE SEQUENCE [LARGE SCALE GENOMIC DNA]</scope>
    <source>
        <strain>ATCC 700084 / mc(2)155</strain>
    </source>
</reference>